<name>QUEF_SALSV</name>
<feature type="chain" id="PRO_1000213083" description="NADPH-dependent 7-cyano-7-deazaguanine reductase">
    <location>
        <begin position="1"/>
        <end position="282"/>
    </location>
</feature>
<feature type="active site" description="Thioimide intermediate" evidence="1">
    <location>
        <position position="190"/>
    </location>
</feature>
<feature type="active site" description="Proton donor" evidence="1">
    <location>
        <position position="197"/>
    </location>
</feature>
<feature type="binding site" evidence="1">
    <location>
        <begin position="88"/>
        <end position="90"/>
    </location>
    <ligand>
        <name>substrate</name>
    </ligand>
</feature>
<feature type="binding site" evidence="1">
    <location>
        <begin position="90"/>
        <end position="91"/>
    </location>
    <ligand>
        <name>NADPH</name>
        <dbReference type="ChEBI" id="CHEBI:57783"/>
    </ligand>
</feature>
<feature type="binding site" evidence="1">
    <location>
        <begin position="229"/>
        <end position="230"/>
    </location>
    <ligand>
        <name>substrate</name>
    </ligand>
</feature>
<feature type="binding site" evidence="1">
    <location>
        <begin position="258"/>
        <end position="259"/>
    </location>
    <ligand>
        <name>NADPH</name>
        <dbReference type="ChEBI" id="CHEBI:57783"/>
    </ligand>
</feature>
<keyword id="KW-0963">Cytoplasm</keyword>
<keyword id="KW-0521">NADP</keyword>
<keyword id="KW-0560">Oxidoreductase</keyword>
<keyword id="KW-0671">Queuosine biosynthesis</keyword>
<proteinExistence type="inferred from homology"/>
<dbReference type="EC" id="1.7.1.13" evidence="1"/>
<dbReference type="EMBL" id="CP001127">
    <property type="protein sequence ID" value="ACF90450.1"/>
    <property type="molecule type" value="Genomic_DNA"/>
</dbReference>
<dbReference type="RefSeq" id="WP_000100465.1">
    <property type="nucleotide sequence ID" value="NC_011094.1"/>
</dbReference>
<dbReference type="SMR" id="B4TUI7"/>
<dbReference type="KEGG" id="sew:SeSA_A3128"/>
<dbReference type="HOGENOM" id="CLU_054738_0_0_6"/>
<dbReference type="UniPathway" id="UPA00392"/>
<dbReference type="Proteomes" id="UP000001865">
    <property type="component" value="Chromosome"/>
</dbReference>
<dbReference type="GO" id="GO:0005737">
    <property type="term" value="C:cytoplasm"/>
    <property type="evidence" value="ECO:0007669"/>
    <property type="project" value="UniProtKB-SubCell"/>
</dbReference>
<dbReference type="GO" id="GO:0033739">
    <property type="term" value="F:preQ1 synthase activity"/>
    <property type="evidence" value="ECO:0007669"/>
    <property type="project" value="UniProtKB-UniRule"/>
</dbReference>
<dbReference type="GO" id="GO:0008616">
    <property type="term" value="P:queuosine biosynthetic process"/>
    <property type="evidence" value="ECO:0007669"/>
    <property type="project" value="UniProtKB-UniRule"/>
</dbReference>
<dbReference type="GO" id="GO:0006400">
    <property type="term" value="P:tRNA modification"/>
    <property type="evidence" value="ECO:0007669"/>
    <property type="project" value="UniProtKB-UniRule"/>
</dbReference>
<dbReference type="FunFam" id="3.30.1130.10:FF:000004">
    <property type="entry name" value="NADPH-dependent 7-cyano-7-deazaguanine reductase"/>
    <property type="match status" value="1"/>
</dbReference>
<dbReference type="Gene3D" id="3.30.1130.10">
    <property type="match status" value="2"/>
</dbReference>
<dbReference type="HAMAP" id="MF_00817">
    <property type="entry name" value="QueF_type2"/>
    <property type="match status" value="1"/>
</dbReference>
<dbReference type="InterPro" id="IPR043133">
    <property type="entry name" value="GTP-CH-I_C/QueF"/>
</dbReference>
<dbReference type="InterPro" id="IPR050084">
    <property type="entry name" value="NADPH_dep_7-cyano-7-deazaG_red"/>
</dbReference>
<dbReference type="InterPro" id="IPR029500">
    <property type="entry name" value="QueF"/>
</dbReference>
<dbReference type="InterPro" id="IPR029139">
    <property type="entry name" value="QueF_N"/>
</dbReference>
<dbReference type="InterPro" id="IPR016428">
    <property type="entry name" value="QueF_type2"/>
</dbReference>
<dbReference type="NCBIfam" id="TIGR03138">
    <property type="entry name" value="QueF"/>
    <property type="match status" value="1"/>
</dbReference>
<dbReference type="PANTHER" id="PTHR34354">
    <property type="entry name" value="NADPH-DEPENDENT 7-CYANO-7-DEAZAGUANINE REDUCTASE"/>
    <property type="match status" value="1"/>
</dbReference>
<dbReference type="PANTHER" id="PTHR34354:SF1">
    <property type="entry name" value="NADPH-DEPENDENT 7-CYANO-7-DEAZAGUANINE REDUCTASE"/>
    <property type="match status" value="1"/>
</dbReference>
<dbReference type="Pfam" id="PF14489">
    <property type="entry name" value="QueF"/>
    <property type="match status" value="1"/>
</dbReference>
<dbReference type="Pfam" id="PF14819">
    <property type="entry name" value="QueF_N"/>
    <property type="match status" value="1"/>
</dbReference>
<dbReference type="PIRSF" id="PIRSF004750">
    <property type="entry name" value="Nitrile_oxidored_YqcD_prd"/>
    <property type="match status" value="1"/>
</dbReference>
<dbReference type="SUPFAM" id="SSF55620">
    <property type="entry name" value="Tetrahydrobiopterin biosynthesis enzymes-like"/>
    <property type="match status" value="1"/>
</dbReference>
<comment type="function">
    <text evidence="1">Catalyzes the NADPH-dependent reduction of 7-cyano-7-deazaguanine (preQ0) to 7-aminomethyl-7-deazaguanine (preQ1).</text>
</comment>
<comment type="catalytic activity">
    <reaction evidence="1">
        <text>7-aminomethyl-7-carbaguanine + 2 NADP(+) = 7-cyano-7-deazaguanine + 2 NADPH + 3 H(+)</text>
        <dbReference type="Rhea" id="RHEA:13409"/>
        <dbReference type="ChEBI" id="CHEBI:15378"/>
        <dbReference type="ChEBI" id="CHEBI:45075"/>
        <dbReference type="ChEBI" id="CHEBI:57783"/>
        <dbReference type="ChEBI" id="CHEBI:58349"/>
        <dbReference type="ChEBI" id="CHEBI:58703"/>
        <dbReference type="EC" id="1.7.1.13"/>
    </reaction>
</comment>
<comment type="pathway">
    <text evidence="1">tRNA modification; tRNA-queuosine biosynthesis.</text>
</comment>
<comment type="subunit">
    <text evidence="1">Homodimer.</text>
</comment>
<comment type="subcellular location">
    <subcellularLocation>
        <location evidence="1">Cytoplasm</location>
    </subcellularLocation>
</comment>
<comment type="similarity">
    <text evidence="1">Belongs to the GTP cyclohydrolase I family. QueF type 2 subfamily.</text>
</comment>
<organism>
    <name type="scientific">Salmonella schwarzengrund (strain CVM19633)</name>
    <dbReference type="NCBI Taxonomy" id="439843"/>
    <lineage>
        <taxon>Bacteria</taxon>
        <taxon>Pseudomonadati</taxon>
        <taxon>Pseudomonadota</taxon>
        <taxon>Gammaproteobacteria</taxon>
        <taxon>Enterobacterales</taxon>
        <taxon>Enterobacteriaceae</taxon>
        <taxon>Salmonella</taxon>
    </lineage>
</organism>
<reference key="1">
    <citation type="journal article" date="2011" name="J. Bacteriol.">
        <title>Comparative genomics of 28 Salmonella enterica isolates: evidence for CRISPR-mediated adaptive sublineage evolution.</title>
        <authorList>
            <person name="Fricke W.F."/>
            <person name="Mammel M.K."/>
            <person name="McDermott P.F."/>
            <person name="Tartera C."/>
            <person name="White D.G."/>
            <person name="Leclerc J.E."/>
            <person name="Ravel J."/>
            <person name="Cebula T.A."/>
        </authorList>
    </citation>
    <scope>NUCLEOTIDE SEQUENCE [LARGE SCALE GENOMIC DNA]</scope>
    <source>
        <strain>CVM19633</strain>
    </source>
</reference>
<protein>
    <recommendedName>
        <fullName evidence="1">NADPH-dependent 7-cyano-7-deazaguanine reductase</fullName>
        <ecNumber evidence="1">1.7.1.13</ecNumber>
    </recommendedName>
    <alternativeName>
        <fullName evidence="1">7-cyano-7-carbaguanine reductase</fullName>
    </alternativeName>
    <alternativeName>
        <fullName evidence="1">NADPH-dependent nitrile oxidoreductase</fullName>
    </alternativeName>
    <alternativeName>
        <fullName evidence="1">PreQ(0) reductase</fullName>
    </alternativeName>
</protein>
<gene>
    <name evidence="1" type="primary">queF</name>
    <name type="ordered locus">SeSA_A3128</name>
</gene>
<accession>B4TUI7</accession>
<evidence type="ECO:0000255" key="1">
    <source>
        <dbReference type="HAMAP-Rule" id="MF_00817"/>
    </source>
</evidence>
<sequence>MSSYENHQALDGLTLGKSTDYRDNYDASLLQGVPRSLNRDPLGLTADNLPFHGADIWTLYELSWLNSRGLPQVAVGHVELDYTSVNLIESKSFKLYLNSFNQTRFDTWETVRQTLERDLRACAQGNVSVRLHRLDELEGQPVAHFHGTCIDDQDISIDNYQFTTDYLQHAVSGEKQVEETLVSHLLKSNCLITHQPDWGSIQIQYRGRKIDREKLLRYLVSFRHHNEFHEQCVERIFNDILRFCQPETLSVYARYTRRGGLDINPWRSNADFVPATGRLARQ</sequence>